<keyword id="KW-0687">Ribonucleoprotein</keyword>
<keyword id="KW-0689">Ribosomal protein</keyword>
<keyword id="KW-0694">RNA-binding</keyword>
<keyword id="KW-0699">rRNA-binding</keyword>
<name>RS11_STRZJ</name>
<organism>
    <name type="scientific">Streptococcus pneumoniae (strain JJA)</name>
    <dbReference type="NCBI Taxonomy" id="488222"/>
    <lineage>
        <taxon>Bacteria</taxon>
        <taxon>Bacillati</taxon>
        <taxon>Bacillota</taxon>
        <taxon>Bacilli</taxon>
        <taxon>Lactobacillales</taxon>
        <taxon>Streptococcaceae</taxon>
        <taxon>Streptococcus</taxon>
    </lineage>
</organism>
<proteinExistence type="inferred from homology"/>
<dbReference type="EMBL" id="CP000919">
    <property type="protein sequence ID" value="ACO19868.1"/>
    <property type="molecule type" value="Genomic_DNA"/>
</dbReference>
<dbReference type="RefSeq" id="WP_001118385.1">
    <property type="nucleotide sequence ID" value="NC_012466.1"/>
</dbReference>
<dbReference type="SMR" id="C1CC31"/>
<dbReference type="GeneID" id="93964226"/>
<dbReference type="KEGG" id="sjj:SPJ_0244"/>
<dbReference type="HOGENOM" id="CLU_072439_5_0_9"/>
<dbReference type="Proteomes" id="UP000002206">
    <property type="component" value="Chromosome"/>
</dbReference>
<dbReference type="GO" id="GO:1990904">
    <property type="term" value="C:ribonucleoprotein complex"/>
    <property type="evidence" value="ECO:0007669"/>
    <property type="project" value="UniProtKB-KW"/>
</dbReference>
<dbReference type="GO" id="GO:0005840">
    <property type="term" value="C:ribosome"/>
    <property type="evidence" value="ECO:0007669"/>
    <property type="project" value="UniProtKB-KW"/>
</dbReference>
<dbReference type="GO" id="GO:0019843">
    <property type="term" value="F:rRNA binding"/>
    <property type="evidence" value="ECO:0007669"/>
    <property type="project" value="UniProtKB-UniRule"/>
</dbReference>
<dbReference type="GO" id="GO:0003735">
    <property type="term" value="F:structural constituent of ribosome"/>
    <property type="evidence" value="ECO:0007669"/>
    <property type="project" value="InterPro"/>
</dbReference>
<dbReference type="GO" id="GO:0006412">
    <property type="term" value="P:translation"/>
    <property type="evidence" value="ECO:0007669"/>
    <property type="project" value="UniProtKB-UniRule"/>
</dbReference>
<dbReference type="FunFam" id="3.30.420.80:FF:000001">
    <property type="entry name" value="30S ribosomal protein S11"/>
    <property type="match status" value="1"/>
</dbReference>
<dbReference type="Gene3D" id="3.30.420.80">
    <property type="entry name" value="Ribosomal protein S11"/>
    <property type="match status" value="1"/>
</dbReference>
<dbReference type="HAMAP" id="MF_01310">
    <property type="entry name" value="Ribosomal_uS11"/>
    <property type="match status" value="1"/>
</dbReference>
<dbReference type="InterPro" id="IPR001971">
    <property type="entry name" value="Ribosomal_uS11"/>
</dbReference>
<dbReference type="InterPro" id="IPR019981">
    <property type="entry name" value="Ribosomal_uS11_bac-type"/>
</dbReference>
<dbReference type="InterPro" id="IPR018102">
    <property type="entry name" value="Ribosomal_uS11_CS"/>
</dbReference>
<dbReference type="InterPro" id="IPR036967">
    <property type="entry name" value="Ribosomal_uS11_sf"/>
</dbReference>
<dbReference type="NCBIfam" id="NF003698">
    <property type="entry name" value="PRK05309.1"/>
    <property type="match status" value="1"/>
</dbReference>
<dbReference type="NCBIfam" id="TIGR03632">
    <property type="entry name" value="uS11_bact"/>
    <property type="match status" value="1"/>
</dbReference>
<dbReference type="PANTHER" id="PTHR11759">
    <property type="entry name" value="40S RIBOSOMAL PROTEIN S14/30S RIBOSOMAL PROTEIN S11"/>
    <property type="match status" value="1"/>
</dbReference>
<dbReference type="Pfam" id="PF00411">
    <property type="entry name" value="Ribosomal_S11"/>
    <property type="match status" value="1"/>
</dbReference>
<dbReference type="PIRSF" id="PIRSF002131">
    <property type="entry name" value="Ribosomal_S11"/>
    <property type="match status" value="1"/>
</dbReference>
<dbReference type="SUPFAM" id="SSF53137">
    <property type="entry name" value="Translational machinery components"/>
    <property type="match status" value="1"/>
</dbReference>
<dbReference type="PROSITE" id="PS00054">
    <property type="entry name" value="RIBOSOMAL_S11"/>
    <property type="match status" value="1"/>
</dbReference>
<accession>C1CC31</accession>
<evidence type="ECO:0000255" key="1">
    <source>
        <dbReference type="HAMAP-Rule" id="MF_01310"/>
    </source>
</evidence>
<evidence type="ECO:0000305" key="2"/>
<gene>
    <name evidence="1" type="primary">rpsK</name>
    <name type="ordered locus">SPJ_0244</name>
</gene>
<feature type="chain" id="PRO_1000165572" description="Small ribosomal subunit protein uS11">
    <location>
        <begin position="1"/>
        <end position="127"/>
    </location>
</feature>
<sequence>MAKPTRKRRVKKNIESGIAHIHATFNNTIVMITDVHGNAIAWSSAGALGFKGSRKSTPFAAQMASEAAAKSAQEHGLKSVEVTVKGPGSGRESAIRALAAAGLEVTAIRDVTPVPHNGARPPKRRRV</sequence>
<reference key="1">
    <citation type="journal article" date="2010" name="Genome Biol.">
        <title>Structure and dynamics of the pan-genome of Streptococcus pneumoniae and closely related species.</title>
        <authorList>
            <person name="Donati C."/>
            <person name="Hiller N.L."/>
            <person name="Tettelin H."/>
            <person name="Muzzi A."/>
            <person name="Croucher N.J."/>
            <person name="Angiuoli S.V."/>
            <person name="Oggioni M."/>
            <person name="Dunning Hotopp J.C."/>
            <person name="Hu F.Z."/>
            <person name="Riley D.R."/>
            <person name="Covacci A."/>
            <person name="Mitchell T.J."/>
            <person name="Bentley S.D."/>
            <person name="Kilian M."/>
            <person name="Ehrlich G.D."/>
            <person name="Rappuoli R."/>
            <person name="Moxon E.R."/>
            <person name="Masignani V."/>
        </authorList>
    </citation>
    <scope>NUCLEOTIDE SEQUENCE [LARGE SCALE GENOMIC DNA]</scope>
    <source>
        <strain>JJA</strain>
    </source>
</reference>
<comment type="function">
    <text evidence="1">Located on the platform of the 30S subunit, it bridges several disparate RNA helices of the 16S rRNA. Forms part of the Shine-Dalgarno cleft in the 70S ribosome.</text>
</comment>
<comment type="subunit">
    <text evidence="1">Part of the 30S ribosomal subunit. Interacts with proteins S7 and S18. Binds to IF-3.</text>
</comment>
<comment type="similarity">
    <text evidence="1">Belongs to the universal ribosomal protein uS11 family.</text>
</comment>
<protein>
    <recommendedName>
        <fullName evidence="1">Small ribosomal subunit protein uS11</fullName>
    </recommendedName>
    <alternativeName>
        <fullName evidence="2">30S ribosomal protein S11</fullName>
    </alternativeName>
</protein>